<accession>Q3KM30</accession>
<sequence>MTKKAKNVEKIPFEDAMKRLEEIIDLMNQPTTSLEASLTLYEEADQLMRICESHIQEVEARIKQLSDQRSES</sequence>
<reference key="1">
    <citation type="journal article" date="2005" name="Infect. Immun.">
        <title>Comparative genomic analysis of Chlamydia trachomatis oculotropic and genitotropic strains.</title>
        <authorList>
            <person name="Carlson J.H."/>
            <person name="Porcella S.F."/>
            <person name="McClarty G."/>
            <person name="Caldwell H.D."/>
        </authorList>
    </citation>
    <scope>NUCLEOTIDE SEQUENCE [LARGE SCALE GENOMIC DNA]</scope>
    <source>
        <strain>ATCC VR-571B / DSM 19440 / HAR-13</strain>
    </source>
</reference>
<name>EX7S_CHLTA</name>
<proteinExistence type="inferred from homology"/>
<evidence type="ECO:0000255" key="1">
    <source>
        <dbReference type="HAMAP-Rule" id="MF_00337"/>
    </source>
</evidence>
<dbReference type="EC" id="3.1.11.6" evidence="1"/>
<dbReference type="EMBL" id="CP000051">
    <property type="protein sequence ID" value="AAX50592.1"/>
    <property type="molecule type" value="Genomic_DNA"/>
</dbReference>
<dbReference type="RefSeq" id="WP_011324684.1">
    <property type="nucleotide sequence ID" value="NC_007429.1"/>
</dbReference>
<dbReference type="SMR" id="Q3KM30"/>
<dbReference type="KEGG" id="cta:CTA_0357"/>
<dbReference type="HOGENOM" id="CLU_145918_3_4_0"/>
<dbReference type="Proteomes" id="UP000002532">
    <property type="component" value="Chromosome"/>
</dbReference>
<dbReference type="GO" id="GO:0005829">
    <property type="term" value="C:cytosol"/>
    <property type="evidence" value="ECO:0007669"/>
    <property type="project" value="TreeGrafter"/>
</dbReference>
<dbReference type="GO" id="GO:0009318">
    <property type="term" value="C:exodeoxyribonuclease VII complex"/>
    <property type="evidence" value="ECO:0007669"/>
    <property type="project" value="InterPro"/>
</dbReference>
<dbReference type="GO" id="GO:0008855">
    <property type="term" value="F:exodeoxyribonuclease VII activity"/>
    <property type="evidence" value="ECO:0007669"/>
    <property type="project" value="UniProtKB-UniRule"/>
</dbReference>
<dbReference type="GO" id="GO:0006308">
    <property type="term" value="P:DNA catabolic process"/>
    <property type="evidence" value="ECO:0007669"/>
    <property type="project" value="UniProtKB-UniRule"/>
</dbReference>
<dbReference type="Gene3D" id="1.10.287.1040">
    <property type="entry name" value="Exonuclease VII, small subunit"/>
    <property type="match status" value="1"/>
</dbReference>
<dbReference type="HAMAP" id="MF_00337">
    <property type="entry name" value="Exonuc_7_S"/>
    <property type="match status" value="1"/>
</dbReference>
<dbReference type="InterPro" id="IPR003761">
    <property type="entry name" value="Exonuc_VII_S"/>
</dbReference>
<dbReference type="InterPro" id="IPR037004">
    <property type="entry name" value="Exonuc_VII_ssu_sf"/>
</dbReference>
<dbReference type="NCBIfam" id="NF002140">
    <property type="entry name" value="PRK00977.1-4"/>
    <property type="match status" value="1"/>
</dbReference>
<dbReference type="NCBIfam" id="TIGR01280">
    <property type="entry name" value="xseB"/>
    <property type="match status" value="1"/>
</dbReference>
<dbReference type="PANTHER" id="PTHR34137">
    <property type="entry name" value="EXODEOXYRIBONUCLEASE 7 SMALL SUBUNIT"/>
    <property type="match status" value="1"/>
</dbReference>
<dbReference type="PANTHER" id="PTHR34137:SF1">
    <property type="entry name" value="EXODEOXYRIBONUCLEASE 7 SMALL SUBUNIT"/>
    <property type="match status" value="1"/>
</dbReference>
<dbReference type="Pfam" id="PF02609">
    <property type="entry name" value="Exonuc_VII_S"/>
    <property type="match status" value="1"/>
</dbReference>
<dbReference type="PIRSF" id="PIRSF006488">
    <property type="entry name" value="Exonuc_VII_S"/>
    <property type="match status" value="1"/>
</dbReference>
<dbReference type="SUPFAM" id="SSF116842">
    <property type="entry name" value="XseB-like"/>
    <property type="match status" value="1"/>
</dbReference>
<gene>
    <name evidence="1" type="primary">xseB</name>
    <name type="ordered locus">CTA_0357</name>
</gene>
<keyword id="KW-0963">Cytoplasm</keyword>
<keyword id="KW-0269">Exonuclease</keyword>
<keyword id="KW-0378">Hydrolase</keyword>
<keyword id="KW-0540">Nuclease</keyword>
<feature type="chain" id="PRO_0000303698" description="Exodeoxyribonuclease 7 small subunit">
    <location>
        <begin position="1"/>
        <end position="72"/>
    </location>
</feature>
<comment type="function">
    <text evidence="1">Bidirectionally degrades single-stranded DNA into large acid-insoluble oligonucleotides, which are then degraded further into small acid-soluble oligonucleotides.</text>
</comment>
<comment type="catalytic activity">
    <reaction evidence="1">
        <text>Exonucleolytic cleavage in either 5'- to 3'- or 3'- to 5'-direction to yield nucleoside 5'-phosphates.</text>
        <dbReference type="EC" id="3.1.11.6"/>
    </reaction>
</comment>
<comment type="subunit">
    <text evidence="1">Heterooligomer composed of large and small subunits.</text>
</comment>
<comment type="subcellular location">
    <subcellularLocation>
        <location evidence="1">Cytoplasm</location>
    </subcellularLocation>
</comment>
<comment type="similarity">
    <text evidence="1">Belongs to the XseB family.</text>
</comment>
<organism>
    <name type="scientific">Chlamydia trachomatis serovar A (strain ATCC VR-571B / DSM 19440 / HAR-13)</name>
    <dbReference type="NCBI Taxonomy" id="315277"/>
    <lineage>
        <taxon>Bacteria</taxon>
        <taxon>Pseudomonadati</taxon>
        <taxon>Chlamydiota</taxon>
        <taxon>Chlamydiia</taxon>
        <taxon>Chlamydiales</taxon>
        <taxon>Chlamydiaceae</taxon>
        <taxon>Chlamydia/Chlamydophila group</taxon>
        <taxon>Chlamydia</taxon>
    </lineage>
</organism>
<protein>
    <recommendedName>
        <fullName evidence="1">Exodeoxyribonuclease 7 small subunit</fullName>
        <ecNumber evidence="1">3.1.11.6</ecNumber>
    </recommendedName>
    <alternativeName>
        <fullName evidence="1">Exodeoxyribonuclease VII small subunit</fullName>
        <shortName evidence="1">Exonuclease VII small subunit</shortName>
    </alternativeName>
</protein>